<dbReference type="EMBL" id="AP009240">
    <property type="protein sequence ID" value="BAG78076.1"/>
    <property type="molecule type" value="Genomic_DNA"/>
</dbReference>
<dbReference type="RefSeq" id="WP_000106627.1">
    <property type="nucleotide sequence ID" value="NC_011415.1"/>
</dbReference>
<dbReference type="GeneID" id="93774879"/>
<dbReference type="KEGG" id="ecy:ECSE_2552"/>
<dbReference type="HOGENOM" id="CLU_128746_0_0_6"/>
<dbReference type="Proteomes" id="UP000008199">
    <property type="component" value="Chromosome"/>
</dbReference>
<dbReference type="GO" id="GO:0005886">
    <property type="term" value="C:plasma membrane"/>
    <property type="evidence" value="ECO:0007669"/>
    <property type="project" value="UniProtKB-SubCell"/>
</dbReference>
<dbReference type="HAMAP" id="MF_01101">
    <property type="entry name" value="UPF0208"/>
    <property type="match status" value="1"/>
</dbReference>
<dbReference type="InterPro" id="IPR007334">
    <property type="entry name" value="UPF0208"/>
</dbReference>
<dbReference type="NCBIfam" id="NF002493">
    <property type="entry name" value="PRK01816.1"/>
    <property type="match status" value="1"/>
</dbReference>
<dbReference type="Pfam" id="PF04217">
    <property type="entry name" value="DUF412"/>
    <property type="match status" value="1"/>
</dbReference>
<reference key="1">
    <citation type="journal article" date="2008" name="DNA Res.">
        <title>Complete genome sequence and comparative analysis of the wild-type commensal Escherichia coli strain SE11 isolated from a healthy adult.</title>
        <authorList>
            <person name="Oshima K."/>
            <person name="Toh H."/>
            <person name="Ogura Y."/>
            <person name="Sasamoto H."/>
            <person name="Morita H."/>
            <person name="Park S.-H."/>
            <person name="Ooka T."/>
            <person name="Iyoda S."/>
            <person name="Taylor T.D."/>
            <person name="Hayashi T."/>
            <person name="Itoh K."/>
            <person name="Hattori M."/>
        </authorList>
    </citation>
    <scope>NUCLEOTIDE SEQUENCE [LARGE SCALE GENOMIC DNA]</scope>
    <source>
        <strain>SE11</strain>
    </source>
</reference>
<accession>B6I7L7</accession>
<name>YFBV_ECOSE</name>
<proteinExistence type="inferred from homology"/>
<gene>
    <name evidence="1" type="primary">yfbV</name>
    <name type="ordered locus">ECSE_2552</name>
</gene>
<feature type="chain" id="PRO_1000136990" description="UPF0208 membrane protein YfbV">
    <location>
        <begin position="1"/>
        <end position="151"/>
    </location>
</feature>
<feature type="transmembrane region" description="Helical" evidence="1">
    <location>
        <begin position="46"/>
        <end position="65"/>
    </location>
</feature>
<feature type="transmembrane region" description="Helical" evidence="1">
    <location>
        <begin position="69"/>
        <end position="91"/>
    </location>
</feature>
<keyword id="KW-0997">Cell inner membrane</keyword>
<keyword id="KW-1003">Cell membrane</keyword>
<keyword id="KW-0472">Membrane</keyword>
<keyword id="KW-0812">Transmembrane</keyword>
<keyword id="KW-1133">Transmembrane helix</keyword>
<protein>
    <recommendedName>
        <fullName evidence="1">UPF0208 membrane protein YfbV</fullName>
    </recommendedName>
</protein>
<sequence length="151" mass="17213">MSTPDNRSVNFFSLFRRGQHYSKTWPLEKRLAPVFVENRVIKMTRYAIRFMPPIAVFTLCWQIALGGQLGPAVATALFALSLPMQGLWWLGKRSVTPLPPAILNWFYEVRGKLQESGQVLAPVEGKPDYQALADTLKRAFKQLDKTFLDDL</sequence>
<comment type="subcellular location">
    <subcellularLocation>
        <location evidence="1">Cell inner membrane</location>
        <topology evidence="1">Multi-pass membrane protein</topology>
    </subcellularLocation>
</comment>
<comment type="similarity">
    <text evidence="1">Belongs to the UPF0208 family.</text>
</comment>
<organism>
    <name type="scientific">Escherichia coli (strain SE11)</name>
    <dbReference type="NCBI Taxonomy" id="409438"/>
    <lineage>
        <taxon>Bacteria</taxon>
        <taxon>Pseudomonadati</taxon>
        <taxon>Pseudomonadota</taxon>
        <taxon>Gammaproteobacteria</taxon>
        <taxon>Enterobacterales</taxon>
        <taxon>Enterobacteriaceae</taxon>
        <taxon>Escherichia</taxon>
    </lineage>
</organism>
<evidence type="ECO:0000255" key="1">
    <source>
        <dbReference type="HAMAP-Rule" id="MF_01101"/>
    </source>
</evidence>